<dbReference type="EMBL" id="BC083775">
    <property type="protein sequence ID" value="AAH83775.1"/>
    <property type="molecule type" value="mRNA"/>
</dbReference>
<dbReference type="SMR" id="Q5XIB1"/>
<dbReference type="FunCoup" id="Q5XIB1">
    <property type="interactions" value="969"/>
</dbReference>
<dbReference type="STRING" id="10116.ENSRNOP00000045788"/>
<dbReference type="iPTMnet" id="Q5XIB1"/>
<dbReference type="PhosphoSitePlus" id="Q5XIB1"/>
<dbReference type="jPOST" id="Q5XIB1"/>
<dbReference type="PaxDb" id="10116-ENSRNOP00000045788"/>
<dbReference type="UCSC" id="RGD:1307043">
    <property type="organism name" value="rat"/>
</dbReference>
<dbReference type="AGR" id="RGD:1307043"/>
<dbReference type="RGD" id="1307043">
    <property type="gene designation" value="Tssc4"/>
</dbReference>
<dbReference type="VEuPathDB" id="HostDB:ENSRNOG00000032677"/>
<dbReference type="eggNOG" id="ENOG502S07M">
    <property type="taxonomic scope" value="Eukaryota"/>
</dbReference>
<dbReference type="HOGENOM" id="CLU_077569_0_0_1"/>
<dbReference type="InParanoid" id="Q5XIB1"/>
<dbReference type="PhylomeDB" id="Q5XIB1"/>
<dbReference type="TreeFam" id="TF335741"/>
<dbReference type="PRO" id="PR:Q5XIB1"/>
<dbReference type="Proteomes" id="UP000002494">
    <property type="component" value="Chromosome 1"/>
</dbReference>
<dbReference type="Bgee" id="ENSRNOG00000032677">
    <property type="expression patterns" value="Expressed in pancreas and 20 other cell types or tissues"/>
</dbReference>
<dbReference type="GO" id="GO:0005737">
    <property type="term" value="C:cytoplasm"/>
    <property type="evidence" value="ECO:0000250"/>
    <property type="project" value="UniProtKB"/>
</dbReference>
<dbReference type="GO" id="GO:0005634">
    <property type="term" value="C:nucleus"/>
    <property type="evidence" value="ECO:0000250"/>
    <property type="project" value="UniProtKB"/>
</dbReference>
<dbReference type="GO" id="GO:0005681">
    <property type="term" value="C:spliceosomal complex"/>
    <property type="evidence" value="ECO:0007669"/>
    <property type="project" value="UniProtKB-KW"/>
</dbReference>
<dbReference type="GO" id="GO:0005682">
    <property type="term" value="C:U5 snRNP"/>
    <property type="evidence" value="ECO:0000250"/>
    <property type="project" value="UniProtKB"/>
</dbReference>
<dbReference type="GO" id="GO:0140313">
    <property type="term" value="F:molecular sequestering activity"/>
    <property type="evidence" value="ECO:0000250"/>
    <property type="project" value="UniProtKB"/>
</dbReference>
<dbReference type="GO" id="GO:0044877">
    <property type="term" value="F:protein-containing complex binding"/>
    <property type="evidence" value="ECO:0000266"/>
    <property type="project" value="RGD"/>
</dbReference>
<dbReference type="GO" id="GO:0000387">
    <property type="term" value="P:spliceosomal snRNP assembly"/>
    <property type="evidence" value="ECO:0000250"/>
    <property type="project" value="UniProtKB"/>
</dbReference>
<dbReference type="GO" id="GO:0000244">
    <property type="term" value="P:spliceosomal tri-snRNP complex assembly"/>
    <property type="evidence" value="ECO:0000250"/>
    <property type="project" value="UniProtKB"/>
</dbReference>
<dbReference type="InterPro" id="IPR029338">
    <property type="entry name" value="TSSC4"/>
</dbReference>
<dbReference type="PANTHER" id="PTHR13445">
    <property type="entry name" value="TUMOR SUPPRESSING SUBTRANSFERABLE CANDIDATE 4 TSSC4"/>
    <property type="match status" value="1"/>
</dbReference>
<dbReference type="PANTHER" id="PTHR13445:SF3">
    <property type="entry name" value="U5 SMALL NUCLEAR RIBONUCLEOPROTEIN TSSC4"/>
    <property type="match status" value="1"/>
</dbReference>
<dbReference type="Pfam" id="PF15264">
    <property type="entry name" value="TSSC4"/>
    <property type="match status" value="1"/>
</dbReference>
<organism>
    <name type="scientific">Rattus norvegicus</name>
    <name type="common">Rat</name>
    <dbReference type="NCBI Taxonomy" id="10116"/>
    <lineage>
        <taxon>Eukaryota</taxon>
        <taxon>Metazoa</taxon>
        <taxon>Chordata</taxon>
        <taxon>Craniata</taxon>
        <taxon>Vertebrata</taxon>
        <taxon>Euteleostomi</taxon>
        <taxon>Mammalia</taxon>
        <taxon>Eutheria</taxon>
        <taxon>Euarchontoglires</taxon>
        <taxon>Glires</taxon>
        <taxon>Rodentia</taxon>
        <taxon>Myomorpha</taxon>
        <taxon>Muroidea</taxon>
        <taxon>Muridae</taxon>
        <taxon>Murinae</taxon>
        <taxon>Rattus</taxon>
    </lineage>
</organism>
<protein>
    <recommendedName>
        <fullName evidence="2">U5 small nuclear ribonucleoprotein TSSC4</fullName>
    </recommendedName>
</protein>
<comment type="function">
    <text evidence="2">Protein associated with the U5 snRNP, during its maturation and its post-splicing recycling and which is required for spliceosomal tri-snRNP complex assembly in the nucleus. Has a molecular sequestering activity and transiently hinders SNRNP200 binding sites for constitutive splicing factors that intervene later during the assembly of the spliceosome and splicing. Together with its molecular sequestering activity, may also function as a molecular adapter and placeholder, coordinating the assembly of the U5 snRNP and its association with the U4/U6 di-snRNP.</text>
</comment>
<comment type="subunit">
    <text evidence="2">Interacts in a RNA-independent manner with distinct U5 snRNP-containing complexes, the mono-U5 snRNP and the post-splicing U5 snRNP-PRPF19 complex. Interacts with SNRNP200; the interaction is direct, excludes recruitment of C9ORF78 and WBP4 to SNRNP200 and negatively regulates its RNA helicase activity. Interacts with PRPF8; the interaction is direct.</text>
</comment>
<comment type="subcellular location">
    <subcellularLocation>
        <location evidence="2">Nucleus</location>
    </subcellularLocation>
    <subcellularLocation>
        <location evidence="2">Cytoplasm</location>
    </subcellularLocation>
    <text evidence="2">Shuttles between the cytoplasm and the nucleus, associated with the U5 snRNP.</text>
</comment>
<comment type="similarity">
    <text evidence="4">Belongs to the TSSC4 family.</text>
</comment>
<proteinExistence type="evidence at transcript level"/>
<feature type="chain" id="PRO_0000076362" description="U5 small nuclear ribonucleoprotein TSSC4">
    <location>
        <begin position="1"/>
        <end position="317"/>
    </location>
</feature>
<feature type="region of interest" description="Disordered" evidence="3">
    <location>
        <begin position="1"/>
        <end position="78"/>
    </location>
</feature>
<feature type="region of interest" description="Hom2; mediates interaction with the U5 snRNP complexes and required for spliceosomal tri-snRNP complex assembly" evidence="2">
    <location>
        <begin position="74"/>
        <end position="101"/>
    </location>
</feature>
<feature type="region of interest" description="Disordered" evidence="3">
    <location>
        <begin position="123"/>
        <end position="151"/>
    </location>
</feature>
<feature type="region of interest" description="Interaction with SNRNP200" evidence="2">
    <location>
        <begin position="146"/>
        <end position="300"/>
    </location>
</feature>
<feature type="region of interest" description="Hom3; mediates interaction with the U5 snRNP complexes" evidence="2">
    <location>
        <begin position="147"/>
        <end position="183"/>
    </location>
</feature>
<feature type="region of interest" description="Hom4; necessary for interaction with the PRPF19 complex and required for spliceosomal tri-snRNP complex assembly" evidence="2">
    <location>
        <begin position="198"/>
        <end position="238"/>
    </location>
</feature>
<feature type="region of interest" description="Disordered" evidence="3">
    <location>
        <begin position="247"/>
        <end position="317"/>
    </location>
</feature>
<feature type="compositionally biased region" description="Acidic residues" evidence="3">
    <location>
        <begin position="1"/>
        <end position="19"/>
    </location>
</feature>
<feature type="compositionally biased region" description="Low complexity" evidence="3">
    <location>
        <begin position="20"/>
        <end position="37"/>
    </location>
</feature>
<feature type="modified residue" description="Phosphoserine" evidence="1">
    <location>
        <position position="57"/>
    </location>
</feature>
<feature type="modified residue" description="Phosphoserine" evidence="1">
    <location>
        <position position="64"/>
    </location>
</feature>
<feature type="modified residue" description="Phosphoserine" evidence="2">
    <location>
        <position position="83"/>
    </location>
</feature>
<feature type="modified residue" description="Phosphoserine" evidence="1">
    <location>
        <position position="92"/>
    </location>
</feature>
<feature type="modified residue" description="N6-acetyllysine" evidence="2">
    <location>
        <position position="214"/>
    </location>
</feature>
<gene>
    <name evidence="5" type="primary">Tssc4</name>
</gene>
<accession>Q5XIB1</accession>
<reference key="1">
    <citation type="journal article" date="2004" name="Genome Res.">
        <title>The status, quality, and expansion of the NIH full-length cDNA project: the Mammalian Gene Collection (MGC).</title>
        <authorList>
            <consortium name="The MGC Project Team"/>
        </authorList>
    </citation>
    <scope>NUCLEOTIDE SEQUENCE [LARGE SCALE MRNA]</scope>
    <source>
        <tissue>Heart</tissue>
    </source>
</reference>
<sequence>MAETEAGLEVEEPTEDDTLPSDTVSLSDSDSDLSLPSGVEVQALSPERLSGESQEDSGPDDPPSHPTGIPTTAVQPFHLRGMSSTFSQRSHSIFDCLESAARQEPCSAPQTSVVDNCSFKRPVAPPSQTPARSLSRVHGNTDPTRVHPVPDYVSHPERWTKYSLEDVSETSEQSNRDAALAFLSSRSQASPTDYVPFFNQDPSSCGEGRVVFTKPVRGSEARAERKRVLKKGVVSGAGGEASVELAHLAGPEAEEWSGHQGQPEVVVPSEAARPESSSGPIGMKTVGFHGSKKRSRDHFRNRDSNPEGPGSERGPSV</sequence>
<evidence type="ECO:0000250" key="1">
    <source>
        <dbReference type="UniProtKB" id="Q9JHE7"/>
    </source>
</evidence>
<evidence type="ECO:0000250" key="2">
    <source>
        <dbReference type="UniProtKB" id="Q9Y5U2"/>
    </source>
</evidence>
<evidence type="ECO:0000256" key="3">
    <source>
        <dbReference type="SAM" id="MobiDB-lite"/>
    </source>
</evidence>
<evidence type="ECO:0000305" key="4"/>
<evidence type="ECO:0000312" key="5">
    <source>
        <dbReference type="RGD" id="1307043"/>
    </source>
</evidence>
<keyword id="KW-0007">Acetylation</keyword>
<keyword id="KW-0963">Cytoplasm</keyword>
<keyword id="KW-0507">mRNA processing</keyword>
<keyword id="KW-0508">mRNA splicing</keyword>
<keyword id="KW-0539">Nucleus</keyword>
<keyword id="KW-0597">Phosphoprotein</keyword>
<keyword id="KW-1185">Reference proteome</keyword>
<keyword id="KW-0747">Spliceosome</keyword>
<name>TSSC4_RAT</name>